<reference key="1">
    <citation type="journal article" date="2002" name="Mol. Microbiol.">
        <title>Genome sequence of Streptococcus agalactiae, a pathogen causing invasive neonatal disease.</title>
        <authorList>
            <person name="Glaser P."/>
            <person name="Rusniok C."/>
            <person name="Buchrieser C."/>
            <person name="Chevalier F."/>
            <person name="Frangeul L."/>
            <person name="Msadek T."/>
            <person name="Zouine M."/>
            <person name="Couve E."/>
            <person name="Lalioui L."/>
            <person name="Poyart C."/>
            <person name="Trieu-Cuot P."/>
            <person name="Kunst F."/>
        </authorList>
    </citation>
    <scope>NUCLEOTIDE SEQUENCE [LARGE SCALE GENOMIC DNA]</scope>
    <source>
        <strain>NEM316</strain>
    </source>
</reference>
<evidence type="ECO:0000255" key="1">
    <source>
        <dbReference type="HAMAP-Rule" id="MF_01854"/>
    </source>
</evidence>
<sequence length="643" mass="74921">MSNFYKLLKEKFPRKEDIVTEMINLEAICQLPKGTEYFISDLHGEYDAVDYLLRTGAGSIRAKLLDCFDWQKIVAVDLDDFCILLYYPKEKLAFDKMNLSASAYKTKLWEMIPLQIQVLKYFSSKYTKSKVRKQLSGKFAYIIEELLAEIDRNPEKKSYFDTIIEKLFELDQVEDLIIVLSQTIQVLIIDHLHVVGDIYDRGRYPDRILNRLMAFPNLDIQWGNHDVTWMGAASGSYLCMVNVIRIAARYNNITLIEDRYGINLRRLVDYSRRYYEPLPSFVPILDGEEMTHPDELDLLNMIQQATAILQFKLEAQLIDRRPEFQMHNRQLINQVNYKDLSISIKEVVHQLKDFNSRCIDSKNPSRLTSEEEELLQQLMIAFQTSESLKKHIDFLFEKGSMYLTYNDNLLFHGCIPMHSNGDFKSFKIAGKTYGGRDLLDLFESQIRLAYARPEKHDDLATDIIWYLWCGENSSLFGKNAMTTFERYYVSDKVTHQERKNPYFKLRDKDDICTALLQEFDLPKFGHIVNGHTPVKEKNGEQPIKANGKMLVIDGGFAKGYQKNTGLAGYTLIYNSYGIQLISHLPFTSIEEVLSGTNYIIDTKRLVEEAKDRILVKDTTIGQKLTKEIKDLDHLYRHFQEYDD</sequence>
<gene>
    <name evidence="1" type="primary">fbp</name>
    <name type="ordered locus">gbs0562</name>
</gene>
<feature type="chain" id="PRO_0000363113" description="Fructose-1,6-bisphosphatase class 3">
    <location>
        <begin position="1"/>
        <end position="643"/>
    </location>
</feature>
<name>F16PC_STRA3</name>
<organism>
    <name type="scientific">Streptococcus agalactiae serotype III (strain NEM316)</name>
    <dbReference type="NCBI Taxonomy" id="211110"/>
    <lineage>
        <taxon>Bacteria</taxon>
        <taxon>Bacillati</taxon>
        <taxon>Bacillota</taxon>
        <taxon>Bacilli</taxon>
        <taxon>Lactobacillales</taxon>
        <taxon>Streptococcaceae</taxon>
        <taxon>Streptococcus</taxon>
    </lineage>
</organism>
<keyword id="KW-0119">Carbohydrate metabolism</keyword>
<keyword id="KW-0378">Hydrolase</keyword>
<keyword id="KW-0464">Manganese</keyword>
<protein>
    <recommendedName>
        <fullName evidence="1">Fructose-1,6-bisphosphatase class 3</fullName>
        <shortName evidence="1">FBPase class 3</shortName>
        <ecNumber evidence="1">3.1.3.11</ecNumber>
    </recommendedName>
    <alternativeName>
        <fullName evidence="1">D-fructose-1,6-bisphosphate 1-phosphohydrolase class 3</fullName>
    </alternativeName>
</protein>
<comment type="catalytic activity">
    <reaction evidence="1">
        <text>beta-D-fructose 1,6-bisphosphate + H2O = beta-D-fructose 6-phosphate + phosphate</text>
        <dbReference type="Rhea" id="RHEA:11064"/>
        <dbReference type="ChEBI" id="CHEBI:15377"/>
        <dbReference type="ChEBI" id="CHEBI:32966"/>
        <dbReference type="ChEBI" id="CHEBI:43474"/>
        <dbReference type="ChEBI" id="CHEBI:57634"/>
        <dbReference type="EC" id="3.1.3.11"/>
    </reaction>
</comment>
<comment type="cofactor">
    <cofactor evidence="1">
        <name>Mn(2+)</name>
        <dbReference type="ChEBI" id="CHEBI:29035"/>
    </cofactor>
</comment>
<comment type="pathway">
    <text evidence="1">Carbohydrate biosynthesis; gluconeogenesis.</text>
</comment>
<comment type="similarity">
    <text evidence="1">Belongs to the FBPase class 3 family.</text>
</comment>
<accession>Q8E6K1</accession>
<proteinExistence type="inferred from homology"/>
<dbReference type="EC" id="3.1.3.11" evidence="1"/>
<dbReference type="EMBL" id="AL766846">
    <property type="protein sequence ID" value="CAD46206.1"/>
    <property type="molecule type" value="Genomic_DNA"/>
</dbReference>
<dbReference type="RefSeq" id="WP_000064640.1">
    <property type="nucleotide sequence ID" value="NC_004368.1"/>
</dbReference>
<dbReference type="KEGG" id="san:gbs0562"/>
<dbReference type="eggNOG" id="COG3855">
    <property type="taxonomic scope" value="Bacteria"/>
</dbReference>
<dbReference type="HOGENOM" id="CLU_028392_2_0_9"/>
<dbReference type="UniPathway" id="UPA00138"/>
<dbReference type="Proteomes" id="UP000000823">
    <property type="component" value="Chromosome"/>
</dbReference>
<dbReference type="GO" id="GO:0042132">
    <property type="term" value="F:fructose 1,6-bisphosphate 1-phosphatase activity"/>
    <property type="evidence" value="ECO:0007669"/>
    <property type="project" value="UniProtKB-UniRule"/>
</dbReference>
<dbReference type="GO" id="GO:0006094">
    <property type="term" value="P:gluconeogenesis"/>
    <property type="evidence" value="ECO:0007669"/>
    <property type="project" value="UniProtKB-UniRule"/>
</dbReference>
<dbReference type="Gene3D" id="3.60.21.10">
    <property type="match status" value="1"/>
</dbReference>
<dbReference type="HAMAP" id="MF_01854">
    <property type="entry name" value="FBPase_class3"/>
    <property type="match status" value="1"/>
</dbReference>
<dbReference type="InterPro" id="IPR009164">
    <property type="entry name" value="FBPtase_class3"/>
</dbReference>
<dbReference type="InterPro" id="IPR029052">
    <property type="entry name" value="Metallo-depent_PP-like"/>
</dbReference>
<dbReference type="Pfam" id="PF06874">
    <property type="entry name" value="FBPase_2"/>
    <property type="match status" value="1"/>
</dbReference>
<dbReference type="PIRSF" id="PIRSF000906">
    <property type="entry name" value="FBPtase_Bacill"/>
    <property type="match status" value="1"/>
</dbReference>
<dbReference type="SUPFAM" id="SSF56300">
    <property type="entry name" value="Metallo-dependent phosphatases"/>
    <property type="match status" value="1"/>
</dbReference>